<accession>C3LFI4</accession>
<dbReference type="EMBL" id="CP001215">
    <property type="protein sequence ID" value="ACP16924.1"/>
    <property type="molecule type" value="Genomic_DNA"/>
</dbReference>
<dbReference type="RefSeq" id="WP_000052064.1">
    <property type="nucleotide sequence ID" value="NC_012581.1"/>
</dbReference>
<dbReference type="SMR" id="C3LFI4"/>
<dbReference type="GeneID" id="93005813"/>
<dbReference type="KEGG" id="bah:BAMEG_5599"/>
<dbReference type="HOGENOM" id="CLU_148047_1_1_9"/>
<dbReference type="GO" id="GO:0005886">
    <property type="term" value="C:plasma membrane"/>
    <property type="evidence" value="ECO:0007669"/>
    <property type="project" value="UniProtKB-SubCell"/>
</dbReference>
<dbReference type="GO" id="GO:0045259">
    <property type="term" value="C:proton-transporting ATP synthase complex"/>
    <property type="evidence" value="ECO:0007669"/>
    <property type="project" value="UniProtKB-KW"/>
</dbReference>
<dbReference type="GO" id="GO:0033177">
    <property type="term" value="C:proton-transporting two-sector ATPase complex, proton-transporting domain"/>
    <property type="evidence" value="ECO:0007669"/>
    <property type="project" value="InterPro"/>
</dbReference>
<dbReference type="GO" id="GO:0008289">
    <property type="term" value="F:lipid binding"/>
    <property type="evidence" value="ECO:0007669"/>
    <property type="project" value="UniProtKB-KW"/>
</dbReference>
<dbReference type="GO" id="GO:0046933">
    <property type="term" value="F:proton-transporting ATP synthase activity, rotational mechanism"/>
    <property type="evidence" value="ECO:0007669"/>
    <property type="project" value="UniProtKB-UniRule"/>
</dbReference>
<dbReference type="CDD" id="cd18185">
    <property type="entry name" value="ATP-synt_Fo_c_ATPE"/>
    <property type="match status" value="1"/>
</dbReference>
<dbReference type="FunFam" id="1.20.20.10:FF:000004">
    <property type="entry name" value="ATP synthase subunit c"/>
    <property type="match status" value="1"/>
</dbReference>
<dbReference type="Gene3D" id="1.20.20.10">
    <property type="entry name" value="F1F0 ATP synthase subunit C"/>
    <property type="match status" value="1"/>
</dbReference>
<dbReference type="HAMAP" id="MF_01396">
    <property type="entry name" value="ATP_synth_c_bact"/>
    <property type="match status" value="1"/>
</dbReference>
<dbReference type="InterPro" id="IPR005953">
    <property type="entry name" value="ATP_synth_csu_bac/chlpt"/>
</dbReference>
<dbReference type="InterPro" id="IPR000454">
    <property type="entry name" value="ATP_synth_F0_csu"/>
</dbReference>
<dbReference type="InterPro" id="IPR020537">
    <property type="entry name" value="ATP_synth_F0_csu_DDCD_BS"/>
</dbReference>
<dbReference type="InterPro" id="IPR038662">
    <property type="entry name" value="ATP_synth_F0_csu_sf"/>
</dbReference>
<dbReference type="InterPro" id="IPR002379">
    <property type="entry name" value="ATPase_proteolipid_c-like_dom"/>
</dbReference>
<dbReference type="InterPro" id="IPR035921">
    <property type="entry name" value="F/V-ATP_Csub_sf"/>
</dbReference>
<dbReference type="NCBIfam" id="TIGR01260">
    <property type="entry name" value="ATP_synt_c"/>
    <property type="match status" value="1"/>
</dbReference>
<dbReference type="NCBIfam" id="NF005363">
    <property type="entry name" value="PRK06876.1"/>
    <property type="match status" value="1"/>
</dbReference>
<dbReference type="PANTHER" id="PTHR10031">
    <property type="entry name" value="ATP SYNTHASE LIPID-BINDING PROTEIN, MITOCHONDRIAL"/>
    <property type="match status" value="1"/>
</dbReference>
<dbReference type="PANTHER" id="PTHR10031:SF0">
    <property type="entry name" value="ATPASE PROTEIN 9"/>
    <property type="match status" value="1"/>
</dbReference>
<dbReference type="Pfam" id="PF00137">
    <property type="entry name" value="ATP-synt_C"/>
    <property type="match status" value="1"/>
</dbReference>
<dbReference type="PRINTS" id="PR00124">
    <property type="entry name" value="ATPASEC"/>
</dbReference>
<dbReference type="SUPFAM" id="SSF81333">
    <property type="entry name" value="F1F0 ATP synthase subunit C"/>
    <property type="match status" value="1"/>
</dbReference>
<dbReference type="PROSITE" id="PS00605">
    <property type="entry name" value="ATPASE_C"/>
    <property type="match status" value="1"/>
</dbReference>
<gene>
    <name evidence="1" type="primary">atpE</name>
    <name type="ordered locus">BAMEG_5599</name>
</gene>
<organism>
    <name type="scientific">Bacillus anthracis (strain CDC 684 / NRRL 3495)</name>
    <dbReference type="NCBI Taxonomy" id="568206"/>
    <lineage>
        <taxon>Bacteria</taxon>
        <taxon>Bacillati</taxon>
        <taxon>Bacillota</taxon>
        <taxon>Bacilli</taxon>
        <taxon>Bacillales</taxon>
        <taxon>Bacillaceae</taxon>
        <taxon>Bacillus</taxon>
        <taxon>Bacillus cereus group</taxon>
    </lineage>
</organism>
<name>ATPL_BACAC</name>
<evidence type="ECO:0000255" key="1">
    <source>
        <dbReference type="HAMAP-Rule" id="MF_01396"/>
    </source>
</evidence>
<proteinExistence type="inferred from homology"/>
<keyword id="KW-0066">ATP synthesis</keyword>
<keyword id="KW-1003">Cell membrane</keyword>
<keyword id="KW-0138">CF(0)</keyword>
<keyword id="KW-0375">Hydrogen ion transport</keyword>
<keyword id="KW-0406">Ion transport</keyword>
<keyword id="KW-0446">Lipid-binding</keyword>
<keyword id="KW-0472">Membrane</keyword>
<keyword id="KW-0812">Transmembrane</keyword>
<keyword id="KW-1133">Transmembrane helix</keyword>
<keyword id="KW-0813">Transport</keyword>
<protein>
    <recommendedName>
        <fullName evidence="1">ATP synthase subunit c</fullName>
    </recommendedName>
    <alternativeName>
        <fullName evidence="1">ATP synthase F(0) sector subunit c</fullName>
    </alternativeName>
    <alternativeName>
        <fullName evidence="1">F-type ATPase subunit c</fullName>
        <shortName evidence="1">F-ATPase subunit c</shortName>
    </alternativeName>
    <alternativeName>
        <fullName evidence="1">Lipid-binding protein</fullName>
    </alternativeName>
</protein>
<feature type="chain" id="PRO_1000184324" description="ATP synthase subunit c">
    <location>
        <begin position="1"/>
        <end position="72"/>
    </location>
</feature>
<feature type="transmembrane region" description="Helical" evidence="1">
    <location>
        <begin position="1"/>
        <end position="21"/>
    </location>
</feature>
<feature type="transmembrane region" description="Helical" evidence="1">
    <location>
        <begin position="49"/>
        <end position="69"/>
    </location>
</feature>
<feature type="site" description="Reversibly protonated during proton transport" evidence="1">
    <location>
        <position position="56"/>
    </location>
</feature>
<sequence>MSLGVIAAAIAIGLSALGAGIGNGLIVSRTIEGVARQPELKGALQTIMFIGVALVEALPIIGVVIAFIVMNK</sequence>
<reference key="1">
    <citation type="submission" date="2008-10" db="EMBL/GenBank/DDBJ databases">
        <title>Genome sequence of Bacillus anthracis str. CDC 684.</title>
        <authorList>
            <person name="Dodson R.J."/>
            <person name="Munk A.C."/>
            <person name="Brettin T."/>
            <person name="Bruce D."/>
            <person name="Detter C."/>
            <person name="Tapia R."/>
            <person name="Han C."/>
            <person name="Sutton G."/>
            <person name="Sims D."/>
        </authorList>
    </citation>
    <scope>NUCLEOTIDE SEQUENCE [LARGE SCALE GENOMIC DNA]</scope>
    <source>
        <strain>CDC 684 / NRRL 3495</strain>
    </source>
</reference>
<comment type="function">
    <text evidence="1">F(1)F(0) ATP synthase produces ATP from ADP in the presence of a proton or sodium gradient. F-type ATPases consist of two structural domains, F(1) containing the extramembraneous catalytic core and F(0) containing the membrane proton channel, linked together by a central stalk and a peripheral stalk. During catalysis, ATP synthesis in the catalytic domain of F(1) is coupled via a rotary mechanism of the central stalk subunits to proton translocation.</text>
</comment>
<comment type="function">
    <text evidence="1">Key component of the F(0) channel; it plays a direct role in translocation across the membrane. A homomeric c-ring of between 10-14 subunits forms the central stalk rotor element with the F(1) delta and epsilon subunits.</text>
</comment>
<comment type="subunit">
    <text evidence="1">F-type ATPases have 2 components, F(1) - the catalytic core - and F(0) - the membrane proton channel. F(1) has five subunits: alpha(3), beta(3), gamma(1), delta(1), epsilon(1). F(0) has three main subunits: a(1), b(2) and c(10-14). The alpha and beta chains form an alternating ring which encloses part of the gamma chain. F(1) is attached to F(0) by a central stalk formed by the gamma and epsilon chains, while a peripheral stalk is formed by the delta and b chains.</text>
</comment>
<comment type="subcellular location">
    <subcellularLocation>
        <location evidence="1">Cell membrane</location>
        <topology evidence="1">Multi-pass membrane protein</topology>
    </subcellularLocation>
</comment>
<comment type="similarity">
    <text evidence="1">Belongs to the ATPase C chain family.</text>
</comment>